<gene>
    <name evidence="3" type="primary">lerI</name>
    <name evidence="4" type="ordered locus">ECA0867</name>
</gene>
<accession>Q6D8V5</accession>
<reference key="1">
    <citation type="journal article" date="2004" name="Proc. Natl. Acad. Sci. U.S.A.">
        <title>Genome sequence of the enterobacterial phytopathogen Erwinia carotovora subsp. atroseptica and characterization of virulence factors.</title>
        <authorList>
            <person name="Bell K.S."/>
            <person name="Sebaihia M."/>
            <person name="Pritchard L."/>
            <person name="Holden M.T.G."/>
            <person name="Hyman L.J."/>
            <person name="Holeva M.C."/>
            <person name="Thomson N.R."/>
            <person name="Bentley S.D."/>
            <person name="Churcher L.J.C."/>
            <person name="Mungall K."/>
            <person name="Atkin R."/>
            <person name="Bason N."/>
            <person name="Brooks K."/>
            <person name="Chillingworth T."/>
            <person name="Clark K."/>
            <person name="Doggett J."/>
            <person name="Fraser A."/>
            <person name="Hance Z."/>
            <person name="Hauser H."/>
            <person name="Jagels K."/>
            <person name="Moule S."/>
            <person name="Norbertczak H."/>
            <person name="Ormond D."/>
            <person name="Price C."/>
            <person name="Quail M.A."/>
            <person name="Sanders M."/>
            <person name="Walker D."/>
            <person name="Whitehead S."/>
            <person name="Salmond G.P.C."/>
            <person name="Birch P.R.J."/>
            <person name="Parkhill J."/>
            <person name="Toth I.K."/>
        </authorList>
    </citation>
    <scope>NUCLEOTIDE SEQUENCE [LARGE SCALE GENOMIC DNA]</scope>
    <source>
        <strain>SCRI 1043 / ATCC BAA-672</strain>
    </source>
</reference>
<reference key="2">
    <citation type="journal article" date="2018" name="Nat. Chem. Biol.">
        <title>Functional assignment of multiple catabolic pathways for D-apiose.</title>
        <authorList>
            <person name="Carter M.S."/>
            <person name="Zhang X."/>
            <person name="Huang H."/>
            <person name="Bouvier J.T."/>
            <person name="Francisco B.S."/>
            <person name="Vetting M.W."/>
            <person name="Al-Obaidi N."/>
            <person name="Bonanno J.B."/>
            <person name="Ghosh A."/>
            <person name="Zallot R.G."/>
            <person name="Andersen H.M."/>
            <person name="Almo S.C."/>
            <person name="Gerlt J.A."/>
        </authorList>
    </citation>
    <scope>FUNCTION</scope>
    <scope>CATALYTIC ACTIVITY</scope>
    <scope>PATHWAY</scope>
</reference>
<name>LERI_PECAS</name>
<evidence type="ECO:0000255" key="1">
    <source>
        <dbReference type="PROSITE-ProRule" id="PRU10127"/>
    </source>
</evidence>
<evidence type="ECO:0000269" key="2">
    <source>
    </source>
</evidence>
<evidence type="ECO:0000303" key="3">
    <source>
    </source>
</evidence>
<evidence type="ECO:0000312" key="4">
    <source>
        <dbReference type="EMBL" id="CAG73779.1"/>
    </source>
</evidence>
<keyword id="KW-0119">Carbohydrate metabolism</keyword>
<keyword id="KW-0413">Isomerase</keyword>
<keyword id="KW-1185">Reference proteome</keyword>
<sequence length="259" mass="28140">MSSRKLTLGVSLKMYFGYQQTLDWCQKIHEIAEQHPLASLPSARLFVLPAFPTLAPVVQRFAQSPVHVGAQDLHWTDNGAFTGEVSGTMLHEMGCRYVEIGHAERRRYFGETDEHFALKTAAAWRNGLTPVLCVGEEQRGSTQQAIDTCQAQLAAALNLAQKQQLTGDLVLAYEPQWAIGSTEPAPTAYISEVCQALKQHLPTQAGVREGRIIYGGSAGPGLLSQLGDAVDGLFLGRFAHDPAAFNAIMDEAFTLSSQA</sequence>
<feature type="chain" id="PRO_0000446038" description="L-erythrulose-1-phosphate isomerase">
    <location>
        <begin position="1"/>
        <end position="259"/>
    </location>
</feature>
<feature type="active site" description="Electrophile" evidence="1">
    <location>
        <position position="102"/>
    </location>
</feature>
<feature type="active site" description="Proton acceptor" evidence="1">
    <location>
        <position position="174"/>
    </location>
</feature>
<proteinExistence type="evidence at protein level"/>
<dbReference type="EC" id="5.3.1.33" evidence="2"/>
<dbReference type="EMBL" id="BX950851">
    <property type="protein sequence ID" value="CAG73779.1"/>
    <property type="molecule type" value="Genomic_DNA"/>
</dbReference>
<dbReference type="RefSeq" id="WP_011092470.1">
    <property type="nucleotide sequence ID" value="NC_004547.2"/>
</dbReference>
<dbReference type="SMR" id="Q6D8V5"/>
<dbReference type="STRING" id="218491.ECA0867"/>
<dbReference type="KEGG" id="eca:ECA0867"/>
<dbReference type="PATRIC" id="fig|218491.5.peg.867"/>
<dbReference type="eggNOG" id="COG0149">
    <property type="taxonomic scope" value="Bacteria"/>
</dbReference>
<dbReference type="HOGENOM" id="CLU_024251_2_3_6"/>
<dbReference type="OrthoDB" id="9809429at2"/>
<dbReference type="BioCyc" id="MetaCyc:MONOMER-20963"/>
<dbReference type="Proteomes" id="UP000007966">
    <property type="component" value="Chromosome"/>
</dbReference>
<dbReference type="GO" id="GO:0005829">
    <property type="term" value="C:cytosol"/>
    <property type="evidence" value="ECO:0007669"/>
    <property type="project" value="TreeGrafter"/>
</dbReference>
<dbReference type="GO" id="GO:0004807">
    <property type="term" value="F:triose-phosphate isomerase activity"/>
    <property type="evidence" value="ECO:0007669"/>
    <property type="project" value="InterPro"/>
</dbReference>
<dbReference type="GO" id="GO:0006094">
    <property type="term" value="P:gluconeogenesis"/>
    <property type="evidence" value="ECO:0007669"/>
    <property type="project" value="TreeGrafter"/>
</dbReference>
<dbReference type="GO" id="GO:0046166">
    <property type="term" value="P:glyceraldehyde-3-phosphate biosynthetic process"/>
    <property type="evidence" value="ECO:0007669"/>
    <property type="project" value="TreeGrafter"/>
</dbReference>
<dbReference type="GO" id="GO:0019563">
    <property type="term" value="P:glycerol catabolic process"/>
    <property type="evidence" value="ECO:0007669"/>
    <property type="project" value="TreeGrafter"/>
</dbReference>
<dbReference type="GO" id="GO:0006096">
    <property type="term" value="P:glycolytic process"/>
    <property type="evidence" value="ECO:0007669"/>
    <property type="project" value="TreeGrafter"/>
</dbReference>
<dbReference type="CDD" id="cd00311">
    <property type="entry name" value="TIM"/>
    <property type="match status" value="1"/>
</dbReference>
<dbReference type="Gene3D" id="3.20.20.70">
    <property type="entry name" value="Aldolase class I"/>
    <property type="match status" value="1"/>
</dbReference>
<dbReference type="InterPro" id="IPR013785">
    <property type="entry name" value="Aldolase_TIM"/>
</dbReference>
<dbReference type="InterPro" id="IPR035990">
    <property type="entry name" value="TIM_sf"/>
</dbReference>
<dbReference type="InterPro" id="IPR000652">
    <property type="entry name" value="Triosephosphate_isomerase"/>
</dbReference>
<dbReference type="PANTHER" id="PTHR21139">
    <property type="entry name" value="TRIOSEPHOSPHATE ISOMERASE"/>
    <property type="match status" value="1"/>
</dbReference>
<dbReference type="PANTHER" id="PTHR21139:SF2">
    <property type="entry name" value="TRIOSEPHOSPHATE ISOMERASE"/>
    <property type="match status" value="1"/>
</dbReference>
<dbReference type="Pfam" id="PF00121">
    <property type="entry name" value="TIM"/>
    <property type="match status" value="1"/>
</dbReference>
<dbReference type="SUPFAM" id="SSF51351">
    <property type="entry name" value="Triosephosphate isomerase (TIM)"/>
    <property type="match status" value="1"/>
</dbReference>
<dbReference type="PROSITE" id="PS51440">
    <property type="entry name" value="TIM_2"/>
    <property type="match status" value="1"/>
</dbReference>
<protein>
    <recommendedName>
        <fullName evidence="3">L-erythrulose-1-phosphate isomerase</fullName>
        <ecNumber evidence="2">5.3.1.33</ecNumber>
    </recommendedName>
</protein>
<comment type="function">
    <text evidence="2">Involved in catabolism of D-apiose. Catalyzes the isomerization of L-erythrulose 1-phosphate to D-erythrulose 4-phosphate.</text>
</comment>
<comment type="catalytic activity">
    <reaction evidence="2">
        <text>L-erythrulose 1-phosphate = D-erythrulose 4-phosphate</text>
        <dbReference type="Rhea" id="RHEA:49588"/>
        <dbReference type="ChEBI" id="CHEBI:58002"/>
        <dbReference type="ChEBI" id="CHEBI:90796"/>
        <dbReference type="EC" id="5.3.1.33"/>
    </reaction>
</comment>
<comment type="pathway">
    <text evidence="2">Carbohydrate metabolism.</text>
</comment>
<comment type="similarity">
    <text evidence="1">Belongs to the triosephosphate isomerase family.</text>
</comment>
<organism>
    <name type="scientific">Pectobacterium atrosepticum (strain SCRI 1043 / ATCC BAA-672)</name>
    <name type="common">Erwinia carotovora subsp. atroseptica</name>
    <dbReference type="NCBI Taxonomy" id="218491"/>
    <lineage>
        <taxon>Bacteria</taxon>
        <taxon>Pseudomonadati</taxon>
        <taxon>Pseudomonadota</taxon>
        <taxon>Gammaproteobacteria</taxon>
        <taxon>Enterobacterales</taxon>
        <taxon>Pectobacteriaceae</taxon>
        <taxon>Pectobacterium</taxon>
    </lineage>
</organism>